<evidence type="ECO:0000255" key="1">
    <source>
        <dbReference type="HAMAP-Rule" id="MF_00636"/>
    </source>
</evidence>
<proteinExistence type="inferred from homology"/>
<feature type="chain" id="PRO_0000258986" description="Nucleotide-binding protein Pcryo_0127">
    <location>
        <begin position="1"/>
        <end position="320"/>
    </location>
</feature>
<feature type="binding site" evidence="1">
    <location>
        <begin position="32"/>
        <end position="39"/>
    </location>
    <ligand>
        <name>ATP</name>
        <dbReference type="ChEBI" id="CHEBI:30616"/>
    </ligand>
</feature>
<feature type="binding site" evidence="1">
    <location>
        <begin position="82"/>
        <end position="85"/>
    </location>
    <ligand>
        <name>GTP</name>
        <dbReference type="ChEBI" id="CHEBI:37565"/>
    </ligand>
</feature>
<sequence length="320" mass="35758">MQANQDTHNAQSKLTDSNESTGDKLSILVVSGRSGSGKTSVLNILEDLGFYSIDNLPLSLVPEAAQKLVCDSGIKRIALGVDIRTPRADLSNFDAIHDSLKQTYGEEAVTVMYVTAQEETLVARFNATRRIHPLMVLDTKGVENNVYNLPAAIEKEIQLLQPIFKHADIKIDTSMLNIHQLKERLRDYVGVDNQIVINLLSFGFKYGSPIDADFVFDVRILPNPHWNPTLRSATGLDAEVSAFFADYPEVAEMTGDIATFLNRWLPDFLHNNRHTVTVAIGCTGGKHRSVFITKHLQDRLQNSLPEGLTVTAKHREKHRW</sequence>
<gene>
    <name type="ordered locus">Pcryo_0127</name>
</gene>
<dbReference type="EMBL" id="CP000323">
    <property type="protein sequence ID" value="ABE73911.1"/>
    <property type="molecule type" value="Genomic_DNA"/>
</dbReference>
<dbReference type="RefSeq" id="WP_011512502.1">
    <property type="nucleotide sequence ID" value="NC_007969.1"/>
</dbReference>
<dbReference type="SMR" id="Q1QEJ2"/>
<dbReference type="STRING" id="335284.Pcryo_0127"/>
<dbReference type="KEGG" id="pcr:Pcryo_0127"/>
<dbReference type="eggNOG" id="COG1660">
    <property type="taxonomic scope" value="Bacteria"/>
</dbReference>
<dbReference type="HOGENOM" id="CLU_059558_1_1_6"/>
<dbReference type="Proteomes" id="UP000002425">
    <property type="component" value="Chromosome"/>
</dbReference>
<dbReference type="GO" id="GO:0005524">
    <property type="term" value="F:ATP binding"/>
    <property type="evidence" value="ECO:0007669"/>
    <property type="project" value="UniProtKB-UniRule"/>
</dbReference>
<dbReference type="GO" id="GO:0005525">
    <property type="term" value="F:GTP binding"/>
    <property type="evidence" value="ECO:0007669"/>
    <property type="project" value="UniProtKB-UniRule"/>
</dbReference>
<dbReference type="HAMAP" id="MF_00636">
    <property type="entry name" value="RapZ_like"/>
    <property type="match status" value="1"/>
</dbReference>
<dbReference type="InterPro" id="IPR027417">
    <property type="entry name" value="P-loop_NTPase"/>
</dbReference>
<dbReference type="InterPro" id="IPR005337">
    <property type="entry name" value="RapZ-like"/>
</dbReference>
<dbReference type="InterPro" id="IPR053930">
    <property type="entry name" value="RapZ-like_N"/>
</dbReference>
<dbReference type="InterPro" id="IPR053931">
    <property type="entry name" value="RapZ_C"/>
</dbReference>
<dbReference type="NCBIfam" id="NF003828">
    <property type="entry name" value="PRK05416.1"/>
    <property type="match status" value="1"/>
</dbReference>
<dbReference type="PANTHER" id="PTHR30448">
    <property type="entry name" value="RNASE ADAPTER PROTEIN RAPZ"/>
    <property type="match status" value="1"/>
</dbReference>
<dbReference type="PANTHER" id="PTHR30448:SF0">
    <property type="entry name" value="RNASE ADAPTER PROTEIN RAPZ"/>
    <property type="match status" value="1"/>
</dbReference>
<dbReference type="Pfam" id="PF22740">
    <property type="entry name" value="PapZ_C"/>
    <property type="match status" value="1"/>
</dbReference>
<dbReference type="Pfam" id="PF03668">
    <property type="entry name" value="RapZ-like_N"/>
    <property type="match status" value="1"/>
</dbReference>
<dbReference type="PIRSF" id="PIRSF005052">
    <property type="entry name" value="P-loopkin"/>
    <property type="match status" value="1"/>
</dbReference>
<dbReference type="SUPFAM" id="SSF52540">
    <property type="entry name" value="P-loop containing nucleoside triphosphate hydrolases"/>
    <property type="match status" value="1"/>
</dbReference>
<name>Y127_PSYCK</name>
<organism>
    <name type="scientific">Psychrobacter cryohalolentis (strain ATCC BAA-1226 / DSM 17306 / VKM B-2378 / K5)</name>
    <dbReference type="NCBI Taxonomy" id="335284"/>
    <lineage>
        <taxon>Bacteria</taxon>
        <taxon>Pseudomonadati</taxon>
        <taxon>Pseudomonadota</taxon>
        <taxon>Gammaproteobacteria</taxon>
        <taxon>Moraxellales</taxon>
        <taxon>Moraxellaceae</taxon>
        <taxon>Psychrobacter</taxon>
    </lineage>
</organism>
<keyword id="KW-0067">ATP-binding</keyword>
<keyword id="KW-0342">GTP-binding</keyword>
<keyword id="KW-0547">Nucleotide-binding</keyword>
<reference key="1">
    <citation type="submission" date="2006-03" db="EMBL/GenBank/DDBJ databases">
        <title>Complete sequence of chromosome of Psychrobacter cryohalolentis K5.</title>
        <authorList>
            <consortium name="US DOE Joint Genome Institute"/>
            <person name="Copeland A."/>
            <person name="Lucas S."/>
            <person name="Lapidus A."/>
            <person name="Barry K."/>
            <person name="Detter J.C."/>
            <person name="Glavina T."/>
            <person name="Hammon N."/>
            <person name="Israni S."/>
            <person name="Dalin E."/>
            <person name="Tice H."/>
            <person name="Pitluck S."/>
            <person name="Brettin T."/>
            <person name="Bruce D."/>
            <person name="Han C."/>
            <person name="Tapia R."/>
            <person name="Sims D.R."/>
            <person name="Gilna P."/>
            <person name="Schmutz J."/>
            <person name="Larimer F."/>
            <person name="Land M."/>
            <person name="Hauser L."/>
            <person name="Kyrpides N."/>
            <person name="Kim E."/>
            <person name="Richardson P."/>
        </authorList>
    </citation>
    <scope>NUCLEOTIDE SEQUENCE [LARGE SCALE GENOMIC DNA]</scope>
    <source>
        <strain>ATCC BAA-1226 / DSM 17306 / VKM B-2378 / K5</strain>
    </source>
</reference>
<accession>Q1QEJ2</accession>
<comment type="function">
    <text evidence="1">Displays ATPase and GTPase activities.</text>
</comment>
<comment type="similarity">
    <text evidence="1">Belongs to the RapZ-like family.</text>
</comment>
<protein>
    <recommendedName>
        <fullName evidence="1">Nucleotide-binding protein Pcryo_0127</fullName>
    </recommendedName>
</protein>